<dbReference type="EC" id="2.5.1.7" evidence="1"/>
<dbReference type="EMBL" id="CP000053">
    <property type="protein sequence ID" value="AAY61796.1"/>
    <property type="molecule type" value="Genomic_DNA"/>
</dbReference>
<dbReference type="SMR" id="Q4UKX7"/>
<dbReference type="STRING" id="315456.RF_0945"/>
<dbReference type="KEGG" id="rfe:RF_0945"/>
<dbReference type="eggNOG" id="COG0766">
    <property type="taxonomic scope" value="Bacteria"/>
</dbReference>
<dbReference type="HOGENOM" id="CLU_027387_0_0_5"/>
<dbReference type="OrthoDB" id="9803760at2"/>
<dbReference type="UniPathway" id="UPA00219"/>
<dbReference type="Proteomes" id="UP000008548">
    <property type="component" value="Chromosome"/>
</dbReference>
<dbReference type="GO" id="GO:0005737">
    <property type="term" value="C:cytoplasm"/>
    <property type="evidence" value="ECO:0007669"/>
    <property type="project" value="UniProtKB-SubCell"/>
</dbReference>
<dbReference type="GO" id="GO:0008760">
    <property type="term" value="F:UDP-N-acetylglucosamine 1-carboxyvinyltransferase activity"/>
    <property type="evidence" value="ECO:0007669"/>
    <property type="project" value="UniProtKB-UniRule"/>
</dbReference>
<dbReference type="GO" id="GO:0051301">
    <property type="term" value="P:cell division"/>
    <property type="evidence" value="ECO:0007669"/>
    <property type="project" value="UniProtKB-KW"/>
</dbReference>
<dbReference type="GO" id="GO:0071555">
    <property type="term" value="P:cell wall organization"/>
    <property type="evidence" value="ECO:0007669"/>
    <property type="project" value="UniProtKB-KW"/>
</dbReference>
<dbReference type="GO" id="GO:0009252">
    <property type="term" value="P:peptidoglycan biosynthetic process"/>
    <property type="evidence" value="ECO:0007669"/>
    <property type="project" value="UniProtKB-UniRule"/>
</dbReference>
<dbReference type="GO" id="GO:0008360">
    <property type="term" value="P:regulation of cell shape"/>
    <property type="evidence" value="ECO:0007669"/>
    <property type="project" value="UniProtKB-KW"/>
</dbReference>
<dbReference type="GO" id="GO:0019277">
    <property type="term" value="P:UDP-N-acetylgalactosamine biosynthetic process"/>
    <property type="evidence" value="ECO:0007669"/>
    <property type="project" value="InterPro"/>
</dbReference>
<dbReference type="CDD" id="cd01555">
    <property type="entry name" value="UdpNAET"/>
    <property type="match status" value="1"/>
</dbReference>
<dbReference type="FunFam" id="3.65.10.10:FF:000001">
    <property type="entry name" value="UDP-N-acetylglucosamine 1-carboxyvinyltransferase"/>
    <property type="match status" value="1"/>
</dbReference>
<dbReference type="Gene3D" id="3.65.10.10">
    <property type="entry name" value="Enolpyruvate transferase domain"/>
    <property type="match status" value="2"/>
</dbReference>
<dbReference type="HAMAP" id="MF_00111">
    <property type="entry name" value="MurA"/>
    <property type="match status" value="1"/>
</dbReference>
<dbReference type="InterPro" id="IPR001986">
    <property type="entry name" value="Enolpyruvate_Tfrase_dom"/>
</dbReference>
<dbReference type="InterPro" id="IPR036968">
    <property type="entry name" value="Enolpyruvate_Tfrase_sf"/>
</dbReference>
<dbReference type="InterPro" id="IPR050068">
    <property type="entry name" value="MurA_subfamily"/>
</dbReference>
<dbReference type="InterPro" id="IPR013792">
    <property type="entry name" value="RNA3'P_cycl/enolpyr_Trfase_a/b"/>
</dbReference>
<dbReference type="InterPro" id="IPR005750">
    <property type="entry name" value="UDP_GlcNAc_COvinyl_MurA"/>
</dbReference>
<dbReference type="NCBIfam" id="TIGR01072">
    <property type="entry name" value="murA"/>
    <property type="match status" value="1"/>
</dbReference>
<dbReference type="NCBIfam" id="NF006873">
    <property type="entry name" value="PRK09369.1"/>
    <property type="match status" value="1"/>
</dbReference>
<dbReference type="PANTHER" id="PTHR43783">
    <property type="entry name" value="UDP-N-ACETYLGLUCOSAMINE 1-CARBOXYVINYLTRANSFERASE"/>
    <property type="match status" value="1"/>
</dbReference>
<dbReference type="PANTHER" id="PTHR43783:SF1">
    <property type="entry name" value="UDP-N-ACETYLGLUCOSAMINE 1-CARBOXYVINYLTRANSFERASE"/>
    <property type="match status" value="1"/>
</dbReference>
<dbReference type="Pfam" id="PF00275">
    <property type="entry name" value="EPSP_synthase"/>
    <property type="match status" value="1"/>
</dbReference>
<dbReference type="SUPFAM" id="SSF55205">
    <property type="entry name" value="EPT/RTPC-like"/>
    <property type="match status" value="1"/>
</dbReference>
<feature type="chain" id="PRO_0000231256" description="UDP-N-acetylglucosamine 1-carboxyvinyltransferase">
    <location>
        <begin position="1"/>
        <end position="419"/>
    </location>
</feature>
<feature type="active site" description="Proton donor" evidence="1">
    <location>
        <position position="119"/>
    </location>
</feature>
<feature type="binding site" evidence="1">
    <location>
        <begin position="22"/>
        <end position="23"/>
    </location>
    <ligand>
        <name>phosphoenolpyruvate</name>
        <dbReference type="ChEBI" id="CHEBI:58702"/>
    </ligand>
</feature>
<feature type="binding site" evidence="1">
    <location>
        <position position="95"/>
    </location>
    <ligand>
        <name>UDP-N-acetyl-alpha-D-glucosamine</name>
        <dbReference type="ChEBI" id="CHEBI:57705"/>
    </ligand>
</feature>
<feature type="binding site" evidence="1">
    <location>
        <begin position="164"/>
        <end position="167"/>
    </location>
    <ligand>
        <name>UDP-N-acetyl-alpha-D-glucosamine</name>
        <dbReference type="ChEBI" id="CHEBI:57705"/>
    </ligand>
</feature>
<feature type="binding site" evidence="1">
    <location>
        <position position="308"/>
    </location>
    <ligand>
        <name>UDP-N-acetyl-alpha-D-glucosamine</name>
        <dbReference type="ChEBI" id="CHEBI:57705"/>
    </ligand>
</feature>
<feature type="binding site" evidence="1">
    <location>
        <position position="330"/>
    </location>
    <ligand>
        <name>UDP-N-acetyl-alpha-D-glucosamine</name>
        <dbReference type="ChEBI" id="CHEBI:57705"/>
    </ligand>
</feature>
<feature type="modified residue" description="2-(S-cysteinyl)pyruvic acid O-phosphothioketal" evidence="1">
    <location>
        <position position="119"/>
    </location>
</feature>
<organism>
    <name type="scientific">Rickettsia felis (strain ATCC VR-1525 / URRWXCal2)</name>
    <name type="common">Rickettsia azadi</name>
    <dbReference type="NCBI Taxonomy" id="315456"/>
    <lineage>
        <taxon>Bacteria</taxon>
        <taxon>Pseudomonadati</taxon>
        <taxon>Pseudomonadota</taxon>
        <taxon>Alphaproteobacteria</taxon>
        <taxon>Rickettsiales</taxon>
        <taxon>Rickettsiaceae</taxon>
        <taxon>Rickettsieae</taxon>
        <taxon>Rickettsia</taxon>
        <taxon>spotted fever group</taxon>
    </lineage>
</organism>
<sequence>MQKLIIHGGKPLKGSINISGAKNAVLPIMAASILTDKLHITNVPKLTDVSTMKDLLRSHGADIKILEHPDEFELIINTGNINNFTANYEIVRKMRASIWVLGPLLTKYGKAKVSLPGGCAIGARQVDLHIAVLKAMGATIEIEDGYINASSKGRIKGTHFVFDKVSVGATINAILAAVLAEGETVLFNCGREPEIVDLCNCLIKMGADIAGVGTSEITIKGKDSLNKASYKVLSDRIEAGTYMFAAAITKGDVKICGIDYHIIENIALKLIETGLKVVQINNGVQVTYEGKLNSVDLETNPYPGFATDLQAQFMSLMTLSSGVSMITENIFENRFMHVPELCRMGADIVVRGNKAVVRGVEMLKGAEVMASDLRASVSLILAGLSTNSKTVLHRIYHLDRGFQDLEKKLSNCGADIKRV</sequence>
<proteinExistence type="inferred from homology"/>
<name>MURA_RICFE</name>
<keyword id="KW-0131">Cell cycle</keyword>
<keyword id="KW-0132">Cell division</keyword>
<keyword id="KW-0133">Cell shape</keyword>
<keyword id="KW-0961">Cell wall biogenesis/degradation</keyword>
<keyword id="KW-0963">Cytoplasm</keyword>
<keyword id="KW-0573">Peptidoglycan synthesis</keyword>
<keyword id="KW-0670">Pyruvate</keyword>
<keyword id="KW-0808">Transferase</keyword>
<reference key="1">
    <citation type="journal article" date="2005" name="PLoS Biol.">
        <title>The genome sequence of Rickettsia felis identifies the first putative conjugative plasmid in an obligate intracellular parasite.</title>
        <authorList>
            <person name="Ogata H."/>
            <person name="Renesto P."/>
            <person name="Audic S."/>
            <person name="Robert C."/>
            <person name="Blanc G."/>
            <person name="Fournier P.-E."/>
            <person name="Parinello H."/>
            <person name="Claverie J.-M."/>
            <person name="Raoult D."/>
        </authorList>
    </citation>
    <scope>NUCLEOTIDE SEQUENCE [LARGE SCALE GENOMIC DNA]</scope>
    <source>
        <strain>ATCC VR-1525 / URRWXCal2</strain>
    </source>
</reference>
<evidence type="ECO:0000255" key="1">
    <source>
        <dbReference type="HAMAP-Rule" id="MF_00111"/>
    </source>
</evidence>
<gene>
    <name evidence="1" type="primary">murA</name>
    <name type="ordered locus">RF_0945</name>
</gene>
<accession>Q4UKX7</accession>
<protein>
    <recommendedName>
        <fullName evidence="1">UDP-N-acetylglucosamine 1-carboxyvinyltransferase</fullName>
        <ecNumber evidence="1">2.5.1.7</ecNumber>
    </recommendedName>
    <alternativeName>
        <fullName evidence="1">Enoylpyruvate transferase</fullName>
    </alternativeName>
    <alternativeName>
        <fullName evidence="1">UDP-N-acetylglucosamine enolpyruvyl transferase</fullName>
        <shortName evidence="1">EPT</shortName>
    </alternativeName>
</protein>
<comment type="function">
    <text evidence="1">Cell wall formation. Adds enolpyruvyl to UDP-N-acetylglucosamine.</text>
</comment>
<comment type="catalytic activity">
    <reaction evidence="1">
        <text>phosphoenolpyruvate + UDP-N-acetyl-alpha-D-glucosamine = UDP-N-acetyl-3-O-(1-carboxyvinyl)-alpha-D-glucosamine + phosphate</text>
        <dbReference type="Rhea" id="RHEA:18681"/>
        <dbReference type="ChEBI" id="CHEBI:43474"/>
        <dbReference type="ChEBI" id="CHEBI:57705"/>
        <dbReference type="ChEBI" id="CHEBI:58702"/>
        <dbReference type="ChEBI" id="CHEBI:68483"/>
        <dbReference type="EC" id="2.5.1.7"/>
    </reaction>
</comment>
<comment type="pathway">
    <text evidence="1">Cell wall biogenesis; peptidoglycan biosynthesis.</text>
</comment>
<comment type="subcellular location">
    <subcellularLocation>
        <location evidence="1">Cytoplasm</location>
    </subcellularLocation>
</comment>
<comment type="similarity">
    <text evidence="1">Belongs to the EPSP synthase family. MurA subfamily.</text>
</comment>